<reference key="1">
    <citation type="journal article" date="2000" name="Nature">
        <title>The genome sequence of the plant pathogen Xylella fastidiosa.</title>
        <authorList>
            <person name="Simpson A.J.G."/>
            <person name="Reinach F.C."/>
            <person name="Arruda P."/>
            <person name="Abreu F.A."/>
            <person name="Acencio M."/>
            <person name="Alvarenga R."/>
            <person name="Alves L.M.C."/>
            <person name="Araya J.E."/>
            <person name="Baia G.S."/>
            <person name="Baptista C.S."/>
            <person name="Barros M.H."/>
            <person name="Bonaccorsi E.D."/>
            <person name="Bordin S."/>
            <person name="Bove J.M."/>
            <person name="Briones M.R.S."/>
            <person name="Bueno M.R.P."/>
            <person name="Camargo A.A."/>
            <person name="Camargo L.E.A."/>
            <person name="Carraro D.M."/>
            <person name="Carrer H."/>
            <person name="Colauto N.B."/>
            <person name="Colombo C."/>
            <person name="Costa F.F."/>
            <person name="Costa M.C.R."/>
            <person name="Costa-Neto C.M."/>
            <person name="Coutinho L.L."/>
            <person name="Cristofani M."/>
            <person name="Dias-Neto E."/>
            <person name="Docena C."/>
            <person name="El-Dorry H."/>
            <person name="Facincani A.P."/>
            <person name="Ferreira A.J.S."/>
            <person name="Ferreira V.C.A."/>
            <person name="Ferro J.A."/>
            <person name="Fraga J.S."/>
            <person name="Franca S.C."/>
            <person name="Franco M.C."/>
            <person name="Frohme M."/>
            <person name="Furlan L.R."/>
            <person name="Garnier M."/>
            <person name="Goldman G.H."/>
            <person name="Goldman M.H.S."/>
            <person name="Gomes S.L."/>
            <person name="Gruber A."/>
            <person name="Ho P.L."/>
            <person name="Hoheisel J.D."/>
            <person name="Junqueira M.L."/>
            <person name="Kemper E.L."/>
            <person name="Kitajima J.P."/>
            <person name="Krieger J.E."/>
            <person name="Kuramae E.E."/>
            <person name="Laigret F."/>
            <person name="Lambais M.R."/>
            <person name="Leite L.C.C."/>
            <person name="Lemos E.G.M."/>
            <person name="Lemos M.V.F."/>
            <person name="Lopes S.A."/>
            <person name="Lopes C.R."/>
            <person name="Machado J.A."/>
            <person name="Machado M.A."/>
            <person name="Madeira A.M.B.N."/>
            <person name="Madeira H.M.F."/>
            <person name="Marino C.L."/>
            <person name="Marques M.V."/>
            <person name="Martins E.A.L."/>
            <person name="Martins E.M.F."/>
            <person name="Matsukuma A.Y."/>
            <person name="Menck C.F.M."/>
            <person name="Miracca E.C."/>
            <person name="Miyaki C.Y."/>
            <person name="Monteiro-Vitorello C.B."/>
            <person name="Moon D.H."/>
            <person name="Nagai M.A."/>
            <person name="Nascimento A.L.T.O."/>
            <person name="Netto L.E.S."/>
            <person name="Nhani A. Jr."/>
            <person name="Nobrega F.G."/>
            <person name="Nunes L.R."/>
            <person name="Oliveira M.A."/>
            <person name="de Oliveira M.C."/>
            <person name="de Oliveira R.C."/>
            <person name="Palmieri D.A."/>
            <person name="Paris A."/>
            <person name="Peixoto B.R."/>
            <person name="Pereira G.A.G."/>
            <person name="Pereira H.A. Jr."/>
            <person name="Pesquero J.B."/>
            <person name="Quaggio R.B."/>
            <person name="Roberto P.G."/>
            <person name="Rodrigues V."/>
            <person name="de Rosa A.J.M."/>
            <person name="de Rosa V.E. Jr."/>
            <person name="de Sa R.G."/>
            <person name="Santelli R.V."/>
            <person name="Sawasaki H.E."/>
            <person name="da Silva A.C.R."/>
            <person name="da Silva A.M."/>
            <person name="da Silva F.R."/>
            <person name="Silva W.A. Jr."/>
            <person name="da Silveira J.F."/>
            <person name="Silvestri M.L.Z."/>
            <person name="Siqueira W.J."/>
            <person name="de Souza A.A."/>
            <person name="de Souza A.P."/>
            <person name="Terenzi M.F."/>
            <person name="Truffi D."/>
            <person name="Tsai S.M."/>
            <person name="Tsuhako M.H."/>
            <person name="Vallada H."/>
            <person name="Van Sluys M.A."/>
            <person name="Verjovski-Almeida S."/>
            <person name="Vettore A.L."/>
            <person name="Zago M.A."/>
            <person name="Zatz M."/>
            <person name="Meidanis J."/>
            <person name="Setubal J.C."/>
        </authorList>
    </citation>
    <scope>NUCLEOTIDE SEQUENCE [LARGE SCALE GENOMIC DNA]</scope>
    <source>
        <strain>9a5c</strain>
    </source>
</reference>
<sequence>MDSSSFSFSHLDRLEAESIHILREVVAEFRNPVLLYSVGKDSSVLLHLLLKAFSPAPPPIPLLHVDTRWKFREMITFRDRRVAETGVQLRVHINPEGVAQEINPITHGAAVHTDVMKTQGLRQALEQGQFDAAIGGARRDEEKSRAKERVFSFRNAHHRWDPKNQRPELWNVYNARIHPGESVRVFPLSNWTELDVWLYIYREKIPVVPLYFAAPRPVVERDGMLILVDDERLPLRPGEVSKLLWVRFRTLGCYPLTGAVESRAATLEDIIAEMLLTPFSERQGRLIDYVPGASMESKKIEGYF</sequence>
<dbReference type="EC" id="2.7.7.4" evidence="1"/>
<dbReference type="EMBL" id="AE003849">
    <property type="protein sequence ID" value="AAF84309.1"/>
    <property type="status" value="ALT_INIT"/>
    <property type="molecule type" value="Genomic_DNA"/>
</dbReference>
<dbReference type="PIR" id="F82672">
    <property type="entry name" value="F82672"/>
</dbReference>
<dbReference type="RefSeq" id="WP_031337887.1">
    <property type="nucleotide sequence ID" value="NC_002488.3"/>
</dbReference>
<dbReference type="SMR" id="Q9PD79"/>
<dbReference type="STRING" id="160492.XF_1500"/>
<dbReference type="KEGG" id="xfa:XF_1500"/>
<dbReference type="PATRIC" id="fig|160492.11.peg.1582"/>
<dbReference type="eggNOG" id="COG0175">
    <property type="taxonomic scope" value="Bacteria"/>
</dbReference>
<dbReference type="HOGENOM" id="CLU_043026_0_0_6"/>
<dbReference type="UniPathway" id="UPA00140">
    <property type="reaction ID" value="UER00204"/>
</dbReference>
<dbReference type="Proteomes" id="UP000000812">
    <property type="component" value="Chromosome"/>
</dbReference>
<dbReference type="GO" id="GO:0005524">
    <property type="term" value="F:ATP binding"/>
    <property type="evidence" value="ECO:0007669"/>
    <property type="project" value="UniProtKB-KW"/>
</dbReference>
<dbReference type="GO" id="GO:0004781">
    <property type="term" value="F:sulfate adenylyltransferase (ATP) activity"/>
    <property type="evidence" value="ECO:0007669"/>
    <property type="project" value="UniProtKB-UniRule"/>
</dbReference>
<dbReference type="GO" id="GO:0070814">
    <property type="term" value="P:hydrogen sulfide biosynthetic process"/>
    <property type="evidence" value="ECO:0007669"/>
    <property type="project" value="UniProtKB-UniRule"/>
</dbReference>
<dbReference type="GO" id="GO:0000103">
    <property type="term" value="P:sulfate assimilation"/>
    <property type="evidence" value="ECO:0007669"/>
    <property type="project" value="UniProtKB-UniRule"/>
</dbReference>
<dbReference type="CDD" id="cd23946">
    <property type="entry name" value="Sulfate_adenylyltransferase_2"/>
    <property type="match status" value="1"/>
</dbReference>
<dbReference type="FunFam" id="3.40.50.620:FF:000002">
    <property type="entry name" value="Sulfate adenylyltransferase subunit 2"/>
    <property type="match status" value="1"/>
</dbReference>
<dbReference type="Gene3D" id="3.40.50.620">
    <property type="entry name" value="HUPs"/>
    <property type="match status" value="1"/>
</dbReference>
<dbReference type="HAMAP" id="MF_00064">
    <property type="entry name" value="Sulf_adenylyltr_sub2"/>
    <property type="match status" value="1"/>
</dbReference>
<dbReference type="InterPro" id="IPR002500">
    <property type="entry name" value="PAPS_reduct_dom"/>
</dbReference>
<dbReference type="InterPro" id="IPR014729">
    <property type="entry name" value="Rossmann-like_a/b/a_fold"/>
</dbReference>
<dbReference type="InterPro" id="IPR011784">
    <property type="entry name" value="SO4_adenylTrfase_ssu"/>
</dbReference>
<dbReference type="InterPro" id="IPR050128">
    <property type="entry name" value="Sulfate_adenylyltrnsfr_sub2"/>
</dbReference>
<dbReference type="NCBIfam" id="TIGR02039">
    <property type="entry name" value="CysD"/>
    <property type="match status" value="1"/>
</dbReference>
<dbReference type="NCBIfam" id="NF003587">
    <property type="entry name" value="PRK05253.1"/>
    <property type="match status" value="1"/>
</dbReference>
<dbReference type="NCBIfam" id="NF009214">
    <property type="entry name" value="PRK12563.1"/>
    <property type="match status" value="1"/>
</dbReference>
<dbReference type="PANTHER" id="PTHR43196">
    <property type="entry name" value="SULFATE ADENYLYLTRANSFERASE SUBUNIT 2"/>
    <property type="match status" value="1"/>
</dbReference>
<dbReference type="PANTHER" id="PTHR43196:SF1">
    <property type="entry name" value="SULFATE ADENYLYLTRANSFERASE SUBUNIT 2"/>
    <property type="match status" value="1"/>
</dbReference>
<dbReference type="Pfam" id="PF01507">
    <property type="entry name" value="PAPS_reduct"/>
    <property type="match status" value="1"/>
</dbReference>
<dbReference type="PIRSF" id="PIRSF002936">
    <property type="entry name" value="CysDAde_trans"/>
    <property type="match status" value="1"/>
</dbReference>
<dbReference type="SUPFAM" id="SSF52402">
    <property type="entry name" value="Adenine nucleotide alpha hydrolases-like"/>
    <property type="match status" value="1"/>
</dbReference>
<gene>
    <name evidence="1" type="primary">cysD</name>
    <name type="ordered locus">XF_1500</name>
</gene>
<organism>
    <name type="scientific">Xylella fastidiosa (strain 9a5c)</name>
    <dbReference type="NCBI Taxonomy" id="160492"/>
    <lineage>
        <taxon>Bacteria</taxon>
        <taxon>Pseudomonadati</taxon>
        <taxon>Pseudomonadota</taxon>
        <taxon>Gammaproteobacteria</taxon>
        <taxon>Lysobacterales</taxon>
        <taxon>Lysobacteraceae</taxon>
        <taxon>Xylella</taxon>
    </lineage>
</organism>
<protein>
    <recommendedName>
        <fullName evidence="1">Sulfate adenylyltransferase subunit 2</fullName>
        <ecNumber evidence="1">2.7.7.4</ecNumber>
    </recommendedName>
    <alternativeName>
        <fullName evidence="1">ATP-sulfurylase small subunit</fullName>
    </alternativeName>
    <alternativeName>
        <fullName evidence="1">Sulfate adenylate transferase</fullName>
        <shortName evidence="1">SAT</shortName>
    </alternativeName>
</protein>
<feature type="chain" id="PRO_0000100681" description="Sulfate adenylyltransferase subunit 2">
    <location>
        <begin position="1"/>
        <end position="304"/>
    </location>
</feature>
<evidence type="ECO:0000255" key="1">
    <source>
        <dbReference type="HAMAP-Rule" id="MF_00064"/>
    </source>
</evidence>
<evidence type="ECO:0000305" key="2"/>
<keyword id="KW-0067">ATP-binding</keyword>
<keyword id="KW-0547">Nucleotide-binding</keyword>
<keyword id="KW-0548">Nucleotidyltransferase</keyword>
<keyword id="KW-0808">Transferase</keyword>
<proteinExistence type="inferred from homology"/>
<name>CYSD_XYLFA</name>
<accession>Q9PD79</accession>
<comment type="function">
    <text evidence="1">With CysN forms the ATP sulfurylase (ATPS) that catalyzes the adenylation of sulfate producing adenosine 5'-phosphosulfate (APS) and diphosphate, the first enzymatic step in sulfur assimilation pathway. APS synthesis involves the formation of a high-energy phosphoric-sulfuric acid anhydride bond driven by GTP hydrolysis by CysN coupled to ATP hydrolysis by CysD.</text>
</comment>
<comment type="catalytic activity">
    <reaction evidence="1">
        <text>sulfate + ATP + H(+) = adenosine 5'-phosphosulfate + diphosphate</text>
        <dbReference type="Rhea" id="RHEA:18133"/>
        <dbReference type="ChEBI" id="CHEBI:15378"/>
        <dbReference type="ChEBI" id="CHEBI:16189"/>
        <dbReference type="ChEBI" id="CHEBI:30616"/>
        <dbReference type="ChEBI" id="CHEBI:33019"/>
        <dbReference type="ChEBI" id="CHEBI:58243"/>
        <dbReference type="EC" id="2.7.7.4"/>
    </reaction>
</comment>
<comment type="pathway">
    <text evidence="1">Sulfur metabolism; hydrogen sulfide biosynthesis; sulfite from sulfate: step 1/3.</text>
</comment>
<comment type="subunit">
    <text evidence="1">Heterodimer composed of CysD, the smaller subunit, and CysNC.</text>
</comment>
<comment type="similarity">
    <text evidence="1">Belongs to the PAPS reductase family. CysD subfamily.</text>
</comment>
<comment type="sequence caution" evidence="2">
    <conflict type="erroneous initiation">
        <sequence resource="EMBL-CDS" id="AAF84309"/>
    </conflict>
    <text>Extended N-terminus.</text>
</comment>